<protein>
    <recommendedName>
        <fullName evidence="1">Glucokinase</fullName>
        <ecNumber evidence="1">2.7.1.2</ecNumber>
    </recommendedName>
    <alternativeName>
        <fullName evidence="1">Glucose kinase</fullName>
    </alternativeName>
</protein>
<name>GLK_ECOLC</name>
<gene>
    <name evidence="1" type="primary">glk</name>
    <name type="ordered locus">EcolC_1281</name>
</gene>
<accession>B1IX74</accession>
<reference key="1">
    <citation type="submission" date="2008-02" db="EMBL/GenBank/DDBJ databases">
        <title>Complete sequence of Escherichia coli C str. ATCC 8739.</title>
        <authorList>
            <person name="Copeland A."/>
            <person name="Lucas S."/>
            <person name="Lapidus A."/>
            <person name="Glavina del Rio T."/>
            <person name="Dalin E."/>
            <person name="Tice H."/>
            <person name="Bruce D."/>
            <person name="Goodwin L."/>
            <person name="Pitluck S."/>
            <person name="Kiss H."/>
            <person name="Brettin T."/>
            <person name="Detter J.C."/>
            <person name="Han C."/>
            <person name="Kuske C.R."/>
            <person name="Schmutz J."/>
            <person name="Larimer F."/>
            <person name="Land M."/>
            <person name="Hauser L."/>
            <person name="Kyrpides N."/>
            <person name="Mikhailova N."/>
            <person name="Ingram L."/>
            <person name="Richardson P."/>
        </authorList>
    </citation>
    <scope>NUCLEOTIDE SEQUENCE [LARGE SCALE GENOMIC DNA]</scope>
    <source>
        <strain>ATCC 8739 / DSM 1576 / NBRC 3972 / NCIMB 8545 / WDCM 00012 / Crooks</strain>
    </source>
</reference>
<keyword id="KW-0067">ATP-binding</keyword>
<keyword id="KW-0963">Cytoplasm</keyword>
<keyword id="KW-0324">Glycolysis</keyword>
<keyword id="KW-0418">Kinase</keyword>
<keyword id="KW-0547">Nucleotide-binding</keyword>
<keyword id="KW-0808">Transferase</keyword>
<dbReference type="EC" id="2.7.1.2" evidence="1"/>
<dbReference type="EMBL" id="CP000946">
    <property type="protein sequence ID" value="ACA76947.1"/>
    <property type="molecule type" value="Genomic_DNA"/>
</dbReference>
<dbReference type="RefSeq" id="WP_000170346.1">
    <property type="nucleotide sequence ID" value="NZ_MTFT01000028.1"/>
</dbReference>
<dbReference type="SMR" id="B1IX74"/>
<dbReference type="GeneID" id="75202543"/>
<dbReference type="KEGG" id="ecl:EcolC_1281"/>
<dbReference type="HOGENOM" id="CLU_042582_1_0_6"/>
<dbReference type="GO" id="GO:0005829">
    <property type="term" value="C:cytosol"/>
    <property type="evidence" value="ECO:0007669"/>
    <property type="project" value="TreeGrafter"/>
</dbReference>
<dbReference type="GO" id="GO:0005524">
    <property type="term" value="F:ATP binding"/>
    <property type="evidence" value="ECO:0007669"/>
    <property type="project" value="UniProtKB-UniRule"/>
</dbReference>
<dbReference type="GO" id="GO:0005536">
    <property type="term" value="F:D-glucose binding"/>
    <property type="evidence" value="ECO:0007669"/>
    <property type="project" value="InterPro"/>
</dbReference>
<dbReference type="GO" id="GO:0004340">
    <property type="term" value="F:glucokinase activity"/>
    <property type="evidence" value="ECO:0007669"/>
    <property type="project" value="UniProtKB-UniRule"/>
</dbReference>
<dbReference type="GO" id="GO:0006096">
    <property type="term" value="P:glycolytic process"/>
    <property type="evidence" value="ECO:0007669"/>
    <property type="project" value="UniProtKB-UniRule"/>
</dbReference>
<dbReference type="CDD" id="cd24008">
    <property type="entry name" value="ASKHA_NBD_GLK"/>
    <property type="match status" value="1"/>
</dbReference>
<dbReference type="FunFam" id="3.30.420.40:FF:000045">
    <property type="entry name" value="Glucokinase"/>
    <property type="match status" value="1"/>
</dbReference>
<dbReference type="FunFam" id="3.40.367.20:FF:000002">
    <property type="entry name" value="Glucokinase"/>
    <property type="match status" value="1"/>
</dbReference>
<dbReference type="Gene3D" id="3.30.420.40">
    <property type="match status" value="1"/>
</dbReference>
<dbReference type="Gene3D" id="3.40.367.20">
    <property type="match status" value="1"/>
</dbReference>
<dbReference type="HAMAP" id="MF_00524">
    <property type="entry name" value="Glucokinase"/>
    <property type="match status" value="1"/>
</dbReference>
<dbReference type="InterPro" id="IPR043129">
    <property type="entry name" value="ATPase_NBD"/>
</dbReference>
<dbReference type="InterPro" id="IPR050201">
    <property type="entry name" value="Bacterial_glucokinase"/>
</dbReference>
<dbReference type="InterPro" id="IPR003836">
    <property type="entry name" value="Glucokinase"/>
</dbReference>
<dbReference type="NCBIfam" id="TIGR00749">
    <property type="entry name" value="glk"/>
    <property type="match status" value="1"/>
</dbReference>
<dbReference type="NCBIfam" id="NF001414">
    <property type="entry name" value="PRK00292.1-1"/>
    <property type="match status" value="1"/>
</dbReference>
<dbReference type="NCBIfam" id="NF001416">
    <property type="entry name" value="PRK00292.1-3"/>
    <property type="match status" value="1"/>
</dbReference>
<dbReference type="PANTHER" id="PTHR47690">
    <property type="entry name" value="GLUCOKINASE"/>
    <property type="match status" value="1"/>
</dbReference>
<dbReference type="PANTHER" id="PTHR47690:SF1">
    <property type="entry name" value="GLUCOKINASE"/>
    <property type="match status" value="1"/>
</dbReference>
<dbReference type="Pfam" id="PF02685">
    <property type="entry name" value="Glucokinase"/>
    <property type="match status" value="1"/>
</dbReference>
<dbReference type="SUPFAM" id="SSF53067">
    <property type="entry name" value="Actin-like ATPase domain"/>
    <property type="match status" value="1"/>
</dbReference>
<sequence length="321" mass="34723">MTKYALVGDVGGTNARLALCDIASGEISQAKTYSGLDYPSLEAVIRVYLEEHKVEVKDGCIAIACPITGDWVAMTNHTWAFSIAEMKKNLGFSHLEIINDFTAVSMAIPMLKKEHLIQFGGAEPVEGKPIAVYGAGTGLGVAHLVHVDKRWVSLPGEGGHVDFAPNSEEEAIILEILRAEIGHVSAERVLSGPGLVNLYRAIVKADNRLPENLKPKDITERALADSCTDCRRALSLFCVIMGRFGGNLALNLGTFGGVFIAGGIVPRFLEFFKASGFRAAFEDKGRFKEYVHDIPVYLIVHDNPGLLGSGAHLRQTLGHIL</sequence>
<feature type="chain" id="PRO_1000081695" description="Glucokinase">
    <location>
        <begin position="1"/>
        <end position="321"/>
    </location>
</feature>
<feature type="binding site" evidence="1">
    <location>
        <begin position="8"/>
        <end position="13"/>
    </location>
    <ligand>
        <name>ATP</name>
        <dbReference type="ChEBI" id="CHEBI:30616"/>
    </ligand>
</feature>
<comment type="function">
    <text>Not highly important in E.coli as glucose is transported into the cell by the PTS system already as glucose 6-phosphate.</text>
</comment>
<comment type="catalytic activity">
    <reaction evidence="1">
        <text>D-glucose + ATP = D-glucose 6-phosphate + ADP + H(+)</text>
        <dbReference type="Rhea" id="RHEA:17825"/>
        <dbReference type="ChEBI" id="CHEBI:4167"/>
        <dbReference type="ChEBI" id="CHEBI:15378"/>
        <dbReference type="ChEBI" id="CHEBI:30616"/>
        <dbReference type="ChEBI" id="CHEBI:61548"/>
        <dbReference type="ChEBI" id="CHEBI:456216"/>
        <dbReference type="EC" id="2.7.1.2"/>
    </reaction>
</comment>
<comment type="subcellular location">
    <subcellularLocation>
        <location evidence="1">Cytoplasm</location>
    </subcellularLocation>
</comment>
<comment type="similarity">
    <text evidence="1">Belongs to the bacterial glucokinase family.</text>
</comment>
<organism>
    <name type="scientific">Escherichia coli (strain ATCC 8739 / DSM 1576 / NBRC 3972 / NCIMB 8545 / WDCM 00012 / Crooks)</name>
    <dbReference type="NCBI Taxonomy" id="481805"/>
    <lineage>
        <taxon>Bacteria</taxon>
        <taxon>Pseudomonadati</taxon>
        <taxon>Pseudomonadota</taxon>
        <taxon>Gammaproteobacteria</taxon>
        <taxon>Enterobacterales</taxon>
        <taxon>Enterobacteriaceae</taxon>
        <taxon>Escherichia</taxon>
    </lineage>
</organism>
<proteinExistence type="inferred from homology"/>
<evidence type="ECO:0000255" key="1">
    <source>
        <dbReference type="HAMAP-Rule" id="MF_00524"/>
    </source>
</evidence>